<proteinExistence type="inferred from homology"/>
<reference key="1">
    <citation type="journal article" date="2008" name="Genomics">
        <title>Evolution in the laboratory: the genome of Halobacterium salinarum strain R1 compared to that of strain NRC-1.</title>
        <authorList>
            <person name="Pfeiffer F."/>
            <person name="Schuster S.C."/>
            <person name="Broicher A."/>
            <person name="Falb M."/>
            <person name="Palm P."/>
            <person name="Rodewald K."/>
            <person name="Ruepp A."/>
            <person name="Soppa J."/>
            <person name="Tittor J."/>
            <person name="Oesterhelt D."/>
        </authorList>
    </citation>
    <scope>NUCLEOTIDE SEQUENCE [LARGE SCALE GENOMIC DNA]</scope>
    <source>
        <strain>ATCC 29341 / DSM 671 / R1</strain>
    </source>
</reference>
<protein>
    <recommendedName>
        <fullName evidence="1">Histidine--tRNA ligase</fullName>
        <ecNumber evidence="1">6.1.1.21</ecNumber>
    </recommendedName>
    <alternativeName>
        <fullName evidence="1">Histidyl-tRNA synthetase</fullName>
        <shortName evidence="1">HisRS</shortName>
    </alternativeName>
</protein>
<organism>
    <name type="scientific">Halobacterium salinarum (strain ATCC 29341 / DSM 671 / R1)</name>
    <dbReference type="NCBI Taxonomy" id="478009"/>
    <lineage>
        <taxon>Archaea</taxon>
        <taxon>Methanobacteriati</taxon>
        <taxon>Methanobacteriota</taxon>
        <taxon>Stenosarchaea group</taxon>
        <taxon>Halobacteria</taxon>
        <taxon>Halobacteriales</taxon>
        <taxon>Halobacteriaceae</taxon>
        <taxon>Halobacterium</taxon>
        <taxon>Halobacterium salinarum NRC-34001</taxon>
    </lineage>
</organism>
<name>SYH_HALS3</name>
<dbReference type="EC" id="6.1.1.21" evidence="1"/>
<dbReference type="EMBL" id="AM774415">
    <property type="protein sequence ID" value="CAP14471.1"/>
    <property type="molecule type" value="Genomic_DNA"/>
</dbReference>
<dbReference type="RefSeq" id="WP_010903476.1">
    <property type="nucleotide sequence ID" value="NC_010364.1"/>
</dbReference>
<dbReference type="SMR" id="B0R6V2"/>
<dbReference type="EnsemblBacteria" id="CAP14471">
    <property type="protein sequence ID" value="CAP14471"/>
    <property type="gene ID" value="OE_3812R"/>
</dbReference>
<dbReference type="GeneID" id="89350192"/>
<dbReference type="KEGG" id="hsl:OE_3812R"/>
<dbReference type="HOGENOM" id="CLU_025113_3_1_2"/>
<dbReference type="PhylomeDB" id="B0R6V2"/>
<dbReference type="Proteomes" id="UP000001321">
    <property type="component" value="Chromosome"/>
</dbReference>
<dbReference type="GO" id="GO:0005737">
    <property type="term" value="C:cytoplasm"/>
    <property type="evidence" value="ECO:0007669"/>
    <property type="project" value="UniProtKB-SubCell"/>
</dbReference>
<dbReference type="GO" id="GO:0005524">
    <property type="term" value="F:ATP binding"/>
    <property type="evidence" value="ECO:0007669"/>
    <property type="project" value="UniProtKB-UniRule"/>
</dbReference>
<dbReference type="GO" id="GO:0004821">
    <property type="term" value="F:histidine-tRNA ligase activity"/>
    <property type="evidence" value="ECO:0007669"/>
    <property type="project" value="UniProtKB-UniRule"/>
</dbReference>
<dbReference type="GO" id="GO:0006427">
    <property type="term" value="P:histidyl-tRNA aminoacylation"/>
    <property type="evidence" value="ECO:0007669"/>
    <property type="project" value="UniProtKB-UniRule"/>
</dbReference>
<dbReference type="CDD" id="cd00773">
    <property type="entry name" value="HisRS-like_core"/>
    <property type="match status" value="1"/>
</dbReference>
<dbReference type="CDD" id="cd00859">
    <property type="entry name" value="HisRS_anticodon"/>
    <property type="match status" value="1"/>
</dbReference>
<dbReference type="Gene3D" id="3.40.50.800">
    <property type="entry name" value="Anticodon-binding domain"/>
    <property type="match status" value="1"/>
</dbReference>
<dbReference type="Gene3D" id="3.30.930.10">
    <property type="entry name" value="Bira Bifunctional Protein, Domain 2"/>
    <property type="match status" value="1"/>
</dbReference>
<dbReference type="HAMAP" id="MF_00127">
    <property type="entry name" value="His_tRNA_synth"/>
    <property type="match status" value="1"/>
</dbReference>
<dbReference type="InterPro" id="IPR006195">
    <property type="entry name" value="aa-tRNA-synth_II"/>
</dbReference>
<dbReference type="InterPro" id="IPR045864">
    <property type="entry name" value="aa-tRNA-synth_II/BPL/LPL"/>
</dbReference>
<dbReference type="InterPro" id="IPR004154">
    <property type="entry name" value="Anticodon-bd"/>
</dbReference>
<dbReference type="InterPro" id="IPR036621">
    <property type="entry name" value="Anticodon-bd_dom_sf"/>
</dbReference>
<dbReference type="InterPro" id="IPR015807">
    <property type="entry name" value="His-tRNA-ligase"/>
</dbReference>
<dbReference type="InterPro" id="IPR041715">
    <property type="entry name" value="HisRS-like_core"/>
</dbReference>
<dbReference type="InterPro" id="IPR004516">
    <property type="entry name" value="HisRS/HisZ"/>
</dbReference>
<dbReference type="InterPro" id="IPR033656">
    <property type="entry name" value="HisRS_anticodon"/>
</dbReference>
<dbReference type="NCBIfam" id="TIGR00442">
    <property type="entry name" value="hisS"/>
    <property type="match status" value="1"/>
</dbReference>
<dbReference type="PANTHER" id="PTHR43707:SF1">
    <property type="entry name" value="HISTIDINE--TRNA LIGASE, MITOCHONDRIAL-RELATED"/>
    <property type="match status" value="1"/>
</dbReference>
<dbReference type="PANTHER" id="PTHR43707">
    <property type="entry name" value="HISTIDYL-TRNA SYNTHETASE"/>
    <property type="match status" value="1"/>
</dbReference>
<dbReference type="Pfam" id="PF03129">
    <property type="entry name" value="HGTP_anticodon"/>
    <property type="match status" value="1"/>
</dbReference>
<dbReference type="Pfam" id="PF13393">
    <property type="entry name" value="tRNA-synt_His"/>
    <property type="match status" value="1"/>
</dbReference>
<dbReference type="PIRSF" id="PIRSF001549">
    <property type="entry name" value="His-tRNA_synth"/>
    <property type="match status" value="1"/>
</dbReference>
<dbReference type="SUPFAM" id="SSF52954">
    <property type="entry name" value="Class II aaRS ABD-related"/>
    <property type="match status" value="1"/>
</dbReference>
<dbReference type="SUPFAM" id="SSF55681">
    <property type="entry name" value="Class II aaRS and biotin synthetases"/>
    <property type="match status" value="1"/>
</dbReference>
<dbReference type="PROSITE" id="PS50862">
    <property type="entry name" value="AA_TRNA_LIGASE_II"/>
    <property type="match status" value="1"/>
</dbReference>
<evidence type="ECO:0000255" key="1">
    <source>
        <dbReference type="HAMAP-Rule" id="MF_00127"/>
    </source>
</evidence>
<keyword id="KW-0030">Aminoacyl-tRNA synthetase</keyword>
<keyword id="KW-0067">ATP-binding</keyword>
<keyword id="KW-0963">Cytoplasm</keyword>
<keyword id="KW-0436">Ligase</keyword>
<keyword id="KW-0547">Nucleotide-binding</keyword>
<keyword id="KW-0648">Protein biosynthesis</keyword>
<accession>B0R6V2</accession>
<gene>
    <name evidence="1" type="primary">hisS</name>
    <name type="ordered locus">OE_3812R</name>
</gene>
<comment type="catalytic activity">
    <reaction evidence="1">
        <text>tRNA(His) + L-histidine + ATP = L-histidyl-tRNA(His) + AMP + diphosphate + H(+)</text>
        <dbReference type="Rhea" id="RHEA:17313"/>
        <dbReference type="Rhea" id="RHEA-COMP:9665"/>
        <dbReference type="Rhea" id="RHEA-COMP:9689"/>
        <dbReference type="ChEBI" id="CHEBI:15378"/>
        <dbReference type="ChEBI" id="CHEBI:30616"/>
        <dbReference type="ChEBI" id="CHEBI:33019"/>
        <dbReference type="ChEBI" id="CHEBI:57595"/>
        <dbReference type="ChEBI" id="CHEBI:78442"/>
        <dbReference type="ChEBI" id="CHEBI:78527"/>
        <dbReference type="ChEBI" id="CHEBI:456215"/>
        <dbReference type="EC" id="6.1.1.21"/>
    </reaction>
</comment>
<comment type="subcellular location">
    <subcellularLocation>
        <location evidence="1">Cytoplasm</location>
    </subcellularLocation>
</comment>
<comment type="similarity">
    <text evidence="1">Belongs to the class-II aminoacyl-tRNA synthetase family.</text>
</comment>
<sequence>MYDRLKGFRDFYPAEMGPRRAAIDAIEDAAASYGFREVGTPAMERTEMYVDKSGAEIVDELYSFTDQGGRDVALTPELTPTVARMVVAKQQALSKPIKWYSSRPFWRYEEPQQGRFREFYQTNLDIFGTSDPRADAEVLAVAADGLTSLGLTGADFEFRVSHRDILGGLLAAFDATVDTEAAIRTVDKREKIERAAYLDDLAAAGLSYDQAEQFDDLLDGDDLDALVSFAGTDRVRDAVANLRNVLDAAETLGVRQYCDVSLTTARGLDYYTGVVFECFDSTGDVGRAVFGGGRYDDLIERFGGQPTPAVGVAPGHATLNLLLENAGVLPDDEFTPDYYVLQVGDTDAEAADVASALRERGNRVDTDITGRSFGAQMNYADNVGADTVVIVGEQDLADGNVTIKNMASGEQTTAPIAAFPGAHDAPRVEDFA</sequence>
<feature type="chain" id="PRO_1000095558" description="Histidine--tRNA ligase">
    <location>
        <begin position="1"/>
        <end position="432"/>
    </location>
</feature>